<organism>
    <name type="scientific">Brucella anthropi (strain ATCC 49188 / DSM 6882 / CCUG 24695 / JCM 21032 / LMG 3331 / NBRC 15819 / NCTC 12168 / Alc 37)</name>
    <name type="common">Ochrobactrum anthropi</name>
    <dbReference type="NCBI Taxonomy" id="439375"/>
    <lineage>
        <taxon>Bacteria</taxon>
        <taxon>Pseudomonadati</taxon>
        <taxon>Pseudomonadota</taxon>
        <taxon>Alphaproteobacteria</taxon>
        <taxon>Hyphomicrobiales</taxon>
        <taxon>Brucellaceae</taxon>
        <taxon>Brucella/Ochrobactrum group</taxon>
        <taxon>Brucella</taxon>
    </lineage>
</organism>
<protein>
    <recommendedName>
        <fullName evidence="1">Sugar fermentation stimulation protein homolog</fullName>
    </recommendedName>
</protein>
<accession>A6X073</accession>
<reference key="1">
    <citation type="journal article" date="2011" name="J. Bacteriol.">
        <title>Genome of Ochrobactrum anthropi ATCC 49188 T, a versatile opportunistic pathogen and symbiont of several eukaryotic hosts.</title>
        <authorList>
            <person name="Chain P.S."/>
            <person name="Lang D.M."/>
            <person name="Comerci D.J."/>
            <person name="Malfatti S.A."/>
            <person name="Vergez L.M."/>
            <person name="Shin M."/>
            <person name="Ugalde R.A."/>
            <person name="Garcia E."/>
            <person name="Tolmasky M.E."/>
        </authorList>
    </citation>
    <scope>NUCLEOTIDE SEQUENCE [LARGE SCALE GENOMIC DNA]</scope>
    <source>
        <strain>ATCC 49188 / DSM 6882 / CCUG 24695 / JCM 21032 / LMG 3331 / NBRC 15819 / NCTC 12168 / Alc 37</strain>
    </source>
</reference>
<evidence type="ECO:0000255" key="1">
    <source>
        <dbReference type="HAMAP-Rule" id="MF_00095"/>
    </source>
</evidence>
<keyword id="KW-1185">Reference proteome</keyword>
<proteinExistence type="inferred from homology"/>
<dbReference type="EMBL" id="CP000758">
    <property type="protein sequence ID" value="ABS14627.1"/>
    <property type="molecule type" value="Genomic_DNA"/>
</dbReference>
<dbReference type="RefSeq" id="WP_012091888.1">
    <property type="nucleotide sequence ID" value="NC_009667.1"/>
</dbReference>
<dbReference type="SMR" id="A6X073"/>
<dbReference type="STRING" id="439375.Oant_1911"/>
<dbReference type="KEGG" id="oan:Oant_1911"/>
<dbReference type="PATRIC" id="fig|439375.7.peg.2011"/>
<dbReference type="eggNOG" id="COG1489">
    <property type="taxonomic scope" value="Bacteria"/>
</dbReference>
<dbReference type="HOGENOM" id="CLU_052299_2_0_5"/>
<dbReference type="PhylomeDB" id="A6X073"/>
<dbReference type="Proteomes" id="UP000002301">
    <property type="component" value="Chromosome 1"/>
</dbReference>
<dbReference type="GO" id="GO:0003677">
    <property type="term" value="F:DNA binding"/>
    <property type="evidence" value="ECO:0007669"/>
    <property type="project" value="InterPro"/>
</dbReference>
<dbReference type="CDD" id="cd22359">
    <property type="entry name" value="SfsA-like_bacterial"/>
    <property type="match status" value="1"/>
</dbReference>
<dbReference type="Gene3D" id="2.40.50.580">
    <property type="match status" value="1"/>
</dbReference>
<dbReference type="Gene3D" id="3.40.1350.60">
    <property type="match status" value="1"/>
</dbReference>
<dbReference type="HAMAP" id="MF_00095">
    <property type="entry name" value="SfsA"/>
    <property type="match status" value="1"/>
</dbReference>
<dbReference type="InterPro" id="IPR005224">
    <property type="entry name" value="SfsA"/>
</dbReference>
<dbReference type="InterPro" id="IPR040452">
    <property type="entry name" value="SfsA_C"/>
</dbReference>
<dbReference type="InterPro" id="IPR041465">
    <property type="entry name" value="SfsA_N"/>
</dbReference>
<dbReference type="NCBIfam" id="TIGR00230">
    <property type="entry name" value="sfsA"/>
    <property type="match status" value="1"/>
</dbReference>
<dbReference type="PANTHER" id="PTHR30545">
    <property type="entry name" value="SUGAR FERMENTATION STIMULATION PROTEIN A"/>
    <property type="match status" value="1"/>
</dbReference>
<dbReference type="PANTHER" id="PTHR30545:SF2">
    <property type="entry name" value="SUGAR FERMENTATION STIMULATION PROTEIN A"/>
    <property type="match status" value="1"/>
</dbReference>
<dbReference type="Pfam" id="PF03749">
    <property type="entry name" value="SfsA"/>
    <property type="match status" value="1"/>
</dbReference>
<dbReference type="Pfam" id="PF17746">
    <property type="entry name" value="SfsA_N"/>
    <property type="match status" value="1"/>
</dbReference>
<name>SFSA_BRUA4</name>
<sequence length="232" mass="25726">MIFQTPLVTGRLERRYKRFLADVTLDDGRFITASVPNTGSMLGLTAPGSRVWLSVSDAPHRKYAHTLQIVEADNTLVGVNTGLPNRIAEEAILNSLIPDLAGYASLKREQKYGRNSRIDLLLDDGPRQRAYVEVKNVHFIRTLGLAEFPDTVTARGAKHLDELVDVVAAGHRGVMLFIIQRNDCSRFSISGDLDPTYARAFERARANGVEAWAVRCHITDKSIDASELVPIE</sequence>
<feature type="chain" id="PRO_1000007999" description="Sugar fermentation stimulation protein homolog">
    <location>
        <begin position="1"/>
        <end position="232"/>
    </location>
</feature>
<gene>
    <name evidence="1" type="primary">sfsA</name>
    <name type="ordered locus">Oant_1911</name>
</gene>
<comment type="similarity">
    <text evidence="1">Belongs to the SfsA family.</text>
</comment>